<evidence type="ECO:0000255" key="1">
    <source>
        <dbReference type="HAMAP-Rule" id="MF_00227"/>
    </source>
</evidence>
<proteinExistence type="inferred from homology"/>
<accession>B8DV04</accession>
<comment type="function">
    <text evidence="1">RNaseP catalyzes the removal of the 5'-leader sequence from pre-tRNA to produce the mature 5'-terminus. It can also cleave other RNA substrates such as 4.5S RNA. The protein component plays an auxiliary but essential role in vivo by binding to the 5'-leader sequence and broadening the substrate specificity of the ribozyme.</text>
</comment>
<comment type="catalytic activity">
    <reaction evidence="1">
        <text>Endonucleolytic cleavage of RNA, removing 5'-extranucleotides from tRNA precursor.</text>
        <dbReference type="EC" id="3.1.26.5"/>
    </reaction>
</comment>
<comment type="subunit">
    <text evidence="1">Consists of a catalytic RNA component (M1 or rnpB) and a protein subunit.</text>
</comment>
<comment type="similarity">
    <text evidence="1">Belongs to the RnpA family.</text>
</comment>
<sequence>MERLKNHREFVAVLKRRRRVSDADIVLHYVVRTPSTPTGAAPARRLGLAVSKSVGNAVVRNTVKRRFRVLAHRYEHELPADCDIVLRAKPGAAHASFQSLEAQIQALFRAVMRKSEQS</sequence>
<reference key="1">
    <citation type="journal article" date="2009" name="J. Bacteriol.">
        <title>Genome sequence of the probiotic bacterium Bifidobacterium animalis subsp. lactis AD011.</title>
        <authorList>
            <person name="Kim J.F."/>
            <person name="Jeong H."/>
            <person name="Yu D.S."/>
            <person name="Choi S.-H."/>
            <person name="Hur C.-G."/>
            <person name="Park M.-S."/>
            <person name="Yoon S.H."/>
            <person name="Kim D.-W."/>
            <person name="Ji G.E."/>
            <person name="Park H.-S."/>
            <person name="Oh T.K."/>
        </authorList>
    </citation>
    <scope>NUCLEOTIDE SEQUENCE [LARGE SCALE GENOMIC DNA]</scope>
    <source>
        <strain>AD011</strain>
    </source>
</reference>
<gene>
    <name evidence="1" type="primary">rnpA</name>
    <name type="ordered locus">BLA_1551</name>
</gene>
<organism>
    <name type="scientific">Bifidobacterium animalis subsp. lactis (strain AD011)</name>
    <dbReference type="NCBI Taxonomy" id="442563"/>
    <lineage>
        <taxon>Bacteria</taxon>
        <taxon>Bacillati</taxon>
        <taxon>Actinomycetota</taxon>
        <taxon>Actinomycetes</taxon>
        <taxon>Bifidobacteriales</taxon>
        <taxon>Bifidobacteriaceae</taxon>
        <taxon>Bifidobacterium</taxon>
    </lineage>
</organism>
<keyword id="KW-0255">Endonuclease</keyword>
<keyword id="KW-0378">Hydrolase</keyword>
<keyword id="KW-0540">Nuclease</keyword>
<keyword id="KW-1185">Reference proteome</keyword>
<keyword id="KW-0694">RNA-binding</keyword>
<keyword id="KW-0819">tRNA processing</keyword>
<protein>
    <recommendedName>
        <fullName evidence="1">Ribonuclease P protein component</fullName>
        <shortName evidence="1">RNase P protein</shortName>
        <shortName evidence="1">RNaseP protein</shortName>
        <ecNumber evidence="1">3.1.26.5</ecNumber>
    </recommendedName>
    <alternativeName>
        <fullName evidence="1">Protein C5</fullName>
    </alternativeName>
</protein>
<dbReference type="EC" id="3.1.26.5" evidence="1"/>
<dbReference type="EMBL" id="CP001213">
    <property type="protein sequence ID" value="ACL29833.1"/>
    <property type="molecule type" value="Genomic_DNA"/>
</dbReference>
<dbReference type="RefSeq" id="WP_004268877.1">
    <property type="nucleotide sequence ID" value="NC_011835.1"/>
</dbReference>
<dbReference type="SMR" id="B8DV04"/>
<dbReference type="STRING" id="442563.BLA_1551"/>
<dbReference type="GeneID" id="29696398"/>
<dbReference type="KEGG" id="bla:BLA_1551"/>
<dbReference type="HOGENOM" id="CLU_117179_4_0_11"/>
<dbReference type="Proteomes" id="UP000002456">
    <property type="component" value="Chromosome"/>
</dbReference>
<dbReference type="GO" id="GO:0030677">
    <property type="term" value="C:ribonuclease P complex"/>
    <property type="evidence" value="ECO:0007669"/>
    <property type="project" value="TreeGrafter"/>
</dbReference>
<dbReference type="GO" id="GO:0042781">
    <property type="term" value="F:3'-tRNA processing endoribonuclease activity"/>
    <property type="evidence" value="ECO:0007669"/>
    <property type="project" value="TreeGrafter"/>
</dbReference>
<dbReference type="GO" id="GO:0004526">
    <property type="term" value="F:ribonuclease P activity"/>
    <property type="evidence" value="ECO:0007669"/>
    <property type="project" value="UniProtKB-UniRule"/>
</dbReference>
<dbReference type="GO" id="GO:0000049">
    <property type="term" value="F:tRNA binding"/>
    <property type="evidence" value="ECO:0007669"/>
    <property type="project" value="UniProtKB-UniRule"/>
</dbReference>
<dbReference type="GO" id="GO:0001682">
    <property type="term" value="P:tRNA 5'-leader removal"/>
    <property type="evidence" value="ECO:0007669"/>
    <property type="project" value="UniProtKB-UniRule"/>
</dbReference>
<dbReference type="Gene3D" id="3.30.230.10">
    <property type="match status" value="1"/>
</dbReference>
<dbReference type="HAMAP" id="MF_00227">
    <property type="entry name" value="RNase_P"/>
    <property type="match status" value="1"/>
</dbReference>
<dbReference type="InterPro" id="IPR020568">
    <property type="entry name" value="Ribosomal_Su5_D2-typ_SF"/>
</dbReference>
<dbReference type="InterPro" id="IPR014721">
    <property type="entry name" value="Ribsml_uS5_D2-typ_fold_subgr"/>
</dbReference>
<dbReference type="InterPro" id="IPR000100">
    <property type="entry name" value="RNase_P"/>
</dbReference>
<dbReference type="NCBIfam" id="TIGR00188">
    <property type="entry name" value="rnpA"/>
    <property type="match status" value="1"/>
</dbReference>
<dbReference type="PANTHER" id="PTHR33992">
    <property type="entry name" value="RIBONUCLEASE P PROTEIN COMPONENT"/>
    <property type="match status" value="1"/>
</dbReference>
<dbReference type="PANTHER" id="PTHR33992:SF1">
    <property type="entry name" value="RIBONUCLEASE P PROTEIN COMPONENT"/>
    <property type="match status" value="1"/>
</dbReference>
<dbReference type="Pfam" id="PF00825">
    <property type="entry name" value="Ribonuclease_P"/>
    <property type="match status" value="1"/>
</dbReference>
<dbReference type="SUPFAM" id="SSF54211">
    <property type="entry name" value="Ribosomal protein S5 domain 2-like"/>
    <property type="match status" value="1"/>
</dbReference>
<feature type="chain" id="PRO_1000194608" description="Ribonuclease P protein component">
    <location>
        <begin position="1"/>
        <end position="118"/>
    </location>
</feature>
<name>RNPA_BIFA0</name>